<reference key="1">
    <citation type="journal article" date="2004" name="J. Mol. Evol.">
        <title>Episodic molecular evolution of pituitary growth hormone in Cetartiodactyla.</title>
        <authorList>
            <person name="Maniou Z."/>
            <person name="Wallis O.C."/>
            <person name="Wallis M."/>
        </authorList>
    </citation>
    <scope>NUCLEOTIDE SEQUENCE [GENOMIC DNA]</scope>
    <source>
        <tissue>Liver</tissue>
    </source>
</reference>
<name>SOMA_CAMDR</name>
<gene>
    <name type="primary">GH1</name>
    <name type="synonym">GH</name>
</gene>
<keyword id="KW-1015">Disulfide bond</keyword>
<keyword id="KW-0372">Hormone</keyword>
<keyword id="KW-0479">Metal-binding</keyword>
<keyword id="KW-0597">Phosphoprotein</keyword>
<keyword id="KW-0964">Secreted</keyword>
<keyword id="KW-0732">Signal</keyword>
<keyword id="KW-0862">Zinc</keyword>
<evidence type="ECO:0000250" key="1"/>
<evidence type="ECO:0000250" key="2">
    <source>
        <dbReference type="UniProtKB" id="P01241"/>
    </source>
</evidence>
<evidence type="ECO:0000305" key="3"/>
<organism>
    <name type="scientific">Camelus dromedarius</name>
    <name type="common">Dromedary</name>
    <name type="synonym">Arabian camel</name>
    <dbReference type="NCBI Taxonomy" id="9838"/>
    <lineage>
        <taxon>Eukaryota</taxon>
        <taxon>Metazoa</taxon>
        <taxon>Chordata</taxon>
        <taxon>Craniata</taxon>
        <taxon>Vertebrata</taxon>
        <taxon>Euteleostomi</taxon>
        <taxon>Mammalia</taxon>
        <taxon>Eutheria</taxon>
        <taxon>Laurasiatheria</taxon>
        <taxon>Artiodactyla</taxon>
        <taxon>Tylopoda</taxon>
        <taxon>Camelidae</taxon>
        <taxon>Camelus</taxon>
    </lineage>
</organism>
<sequence>MAAGPRTSVLLAFTLLCLPWPQEAGAFPAMPLSSLFANAVLRAQHLHQLAADTYKEFERTYIPEGQRYSIQNAQAAFCFSETIPAPTGKDEAQQRSDVELLRFSLLLIQSWLGPVQFLSRVFTNSLVFGTSDRVYEKLKDLEEGIQALMRELEDGSPRAGQILRQTYDKFDTNLRSDDALLKNYGLLSCFKKDLHKAETYLRVMKCRRFVESSCAF</sequence>
<protein>
    <recommendedName>
        <fullName>Somatotropin</fullName>
    </recommendedName>
    <alternativeName>
        <fullName>Growth hormone</fullName>
    </alternativeName>
</protein>
<dbReference type="EMBL" id="AJ575419">
    <property type="protein sequence ID" value="CAE01391.1"/>
    <property type="molecule type" value="Genomic_DNA"/>
</dbReference>
<dbReference type="RefSeq" id="XP_010979998.1">
    <property type="nucleotide sequence ID" value="XM_010981696.1"/>
</dbReference>
<dbReference type="SMR" id="Q7YRR6"/>
<dbReference type="STRING" id="9838.ENSCDRP00005030867"/>
<dbReference type="GeneID" id="105090400"/>
<dbReference type="KEGG" id="cdk:105090400"/>
<dbReference type="OrthoDB" id="9925773at2759"/>
<dbReference type="GO" id="GO:0005615">
    <property type="term" value="C:extracellular space"/>
    <property type="evidence" value="ECO:0007669"/>
    <property type="project" value="Ensembl"/>
</dbReference>
<dbReference type="GO" id="GO:0005634">
    <property type="term" value="C:nucleus"/>
    <property type="evidence" value="ECO:0007669"/>
    <property type="project" value="Ensembl"/>
</dbReference>
<dbReference type="GO" id="GO:0005886">
    <property type="term" value="C:plasma membrane"/>
    <property type="evidence" value="ECO:0007669"/>
    <property type="project" value="Ensembl"/>
</dbReference>
<dbReference type="GO" id="GO:0030141">
    <property type="term" value="C:secretory granule"/>
    <property type="evidence" value="ECO:0007669"/>
    <property type="project" value="Ensembl"/>
</dbReference>
<dbReference type="GO" id="GO:0005802">
    <property type="term" value="C:trans-Golgi network"/>
    <property type="evidence" value="ECO:0007669"/>
    <property type="project" value="Ensembl"/>
</dbReference>
<dbReference type="GO" id="GO:0008083">
    <property type="term" value="F:growth factor activity"/>
    <property type="evidence" value="ECO:0007669"/>
    <property type="project" value="TreeGrafter"/>
</dbReference>
<dbReference type="GO" id="GO:0005131">
    <property type="term" value="F:growth hormone receptor binding"/>
    <property type="evidence" value="ECO:0007669"/>
    <property type="project" value="Ensembl"/>
</dbReference>
<dbReference type="GO" id="GO:0005179">
    <property type="term" value="F:hormone activity"/>
    <property type="evidence" value="ECO:0007669"/>
    <property type="project" value="UniProtKB-KW"/>
</dbReference>
<dbReference type="GO" id="GO:0046872">
    <property type="term" value="F:metal ion binding"/>
    <property type="evidence" value="ECO:0007669"/>
    <property type="project" value="UniProtKB-KW"/>
</dbReference>
<dbReference type="GO" id="GO:0048513">
    <property type="term" value="P:animal organ development"/>
    <property type="evidence" value="ECO:0007669"/>
    <property type="project" value="TreeGrafter"/>
</dbReference>
<dbReference type="GO" id="GO:0032869">
    <property type="term" value="P:cellular response to insulin stimulus"/>
    <property type="evidence" value="ECO:0007669"/>
    <property type="project" value="Ensembl"/>
</dbReference>
<dbReference type="GO" id="GO:0060396">
    <property type="term" value="P:growth hormone receptor signaling pathway"/>
    <property type="evidence" value="ECO:0007669"/>
    <property type="project" value="TreeGrafter"/>
</dbReference>
<dbReference type="GO" id="GO:0040018">
    <property type="term" value="P:positive regulation of multicellular organism growth"/>
    <property type="evidence" value="ECO:0007669"/>
    <property type="project" value="Ensembl"/>
</dbReference>
<dbReference type="GO" id="GO:0046427">
    <property type="term" value="P:positive regulation of receptor signaling pathway via JAK-STAT"/>
    <property type="evidence" value="ECO:0007669"/>
    <property type="project" value="TreeGrafter"/>
</dbReference>
<dbReference type="GO" id="GO:0032094">
    <property type="term" value="P:response to food"/>
    <property type="evidence" value="ECO:0007669"/>
    <property type="project" value="Ensembl"/>
</dbReference>
<dbReference type="CDD" id="cd10285">
    <property type="entry name" value="somatotropin_like"/>
    <property type="match status" value="1"/>
</dbReference>
<dbReference type="FunFam" id="1.20.1250.10:FF:000002">
    <property type="entry name" value="Growth hormone"/>
    <property type="match status" value="1"/>
</dbReference>
<dbReference type="Gene3D" id="1.20.1250.10">
    <property type="match status" value="1"/>
</dbReference>
<dbReference type="InterPro" id="IPR009079">
    <property type="entry name" value="4_helix_cytokine-like_core"/>
</dbReference>
<dbReference type="InterPro" id="IPR034975">
    <property type="entry name" value="Somatotropin"/>
</dbReference>
<dbReference type="InterPro" id="IPR001400">
    <property type="entry name" value="Somatotropin/Prolactin"/>
</dbReference>
<dbReference type="InterPro" id="IPR018116">
    <property type="entry name" value="Somatotropin_CS"/>
</dbReference>
<dbReference type="PANTHER" id="PTHR11417:SF2">
    <property type="entry name" value="SOMATOTROPIN"/>
    <property type="match status" value="1"/>
</dbReference>
<dbReference type="PANTHER" id="PTHR11417">
    <property type="entry name" value="SOMATOTROPIN,PROLACTIN"/>
    <property type="match status" value="1"/>
</dbReference>
<dbReference type="Pfam" id="PF00103">
    <property type="entry name" value="Hormone_1"/>
    <property type="match status" value="1"/>
</dbReference>
<dbReference type="PRINTS" id="PR00836">
    <property type="entry name" value="SOMATOTROPIN"/>
</dbReference>
<dbReference type="SUPFAM" id="SSF47266">
    <property type="entry name" value="4-helical cytokines"/>
    <property type="match status" value="1"/>
</dbReference>
<dbReference type="PROSITE" id="PS00266">
    <property type="entry name" value="SOMATOTROPIN_1"/>
    <property type="match status" value="1"/>
</dbReference>
<dbReference type="PROSITE" id="PS00338">
    <property type="entry name" value="SOMATOTROPIN_2"/>
    <property type="match status" value="1"/>
</dbReference>
<accession>Q7YRR6</accession>
<proteinExistence type="inferred from homology"/>
<feature type="signal peptide" evidence="1">
    <location>
        <begin position="1"/>
        <end position="26"/>
    </location>
</feature>
<feature type="chain" id="PRO_0000032977" description="Somatotropin">
    <location>
        <begin position="27"/>
        <end position="216"/>
    </location>
</feature>
<feature type="binding site" evidence="1">
    <location>
        <position position="45"/>
    </location>
    <ligand>
        <name>Zn(2+)</name>
        <dbReference type="ChEBI" id="CHEBI:29105"/>
    </ligand>
</feature>
<feature type="binding site" evidence="1">
    <location>
        <position position="198"/>
    </location>
    <ligand>
        <name>Zn(2+)</name>
        <dbReference type="ChEBI" id="CHEBI:29105"/>
    </ligand>
</feature>
<feature type="modified residue" description="Phosphoserine" evidence="2">
    <location>
        <position position="131"/>
    </location>
</feature>
<feature type="disulfide bond" evidence="1">
    <location>
        <begin position="78"/>
        <end position="189"/>
    </location>
</feature>
<feature type="disulfide bond" evidence="1">
    <location>
        <begin position="206"/>
        <end position="214"/>
    </location>
</feature>
<comment type="function">
    <text evidence="1">Plays an important role in growth control. Its major role in stimulating body growth is to stimulate the liver and other tissues to secrete IGF1. It stimulates both the differentiation and proliferation of myoblasts. It also stimulates amino acid uptake and protein synthesis in muscle and other tissues (By similarity).</text>
</comment>
<comment type="subcellular location">
    <subcellularLocation>
        <location>Secreted</location>
    </subcellularLocation>
</comment>
<comment type="similarity">
    <text evidence="3">Belongs to the somatotropin/prolactin family.</text>
</comment>